<sequence length="468" mass="51252">MEASHLQIYWHDSQPVYSLTFQKNSANDKLFTAGGDNKVRIWKLNRDENGQNGGVRKIESLDFLGSLTHHEQAINVIRFNSKGDVLASAGDDGQVLLWKQEDPNTQQESVVRPFGMDAETSEADENKEKWVVWKRLRGGSGATAAAEIYDLAWSPDNRNIVVACMDNSIRLFDVGAGMLVCGQSDHGHYVQGVAWDPLNQFILSQSADRSLHVYGVILSSAGVVTGLKLRSKIAKAELPCPGDVLRTNYLFHNETLPSFFRRCSISPCGGLVVIPSGVYKVAGDEVANCVYVYTRSGILNSAGGVKNRPAIRIPSLKKPALMAAFSPVFYETCQKSVLKLPYKLVFAIATTNEVLVYDTDVLEPLCVVGNIHYSPITDLAWSEDGSTLLISSTDGFCSYVSIDTETQFGSRIEPPAMHAEPLDTDESAVAAKNQREAGGIVNMLPVKKIPCNSSDSKKRRIHPTPVDL</sequence>
<comment type="function">
    <text evidence="1 5">Acts as a component of the histone chaperone complex chromatin assembly factor 1 (CAF-1), which assembles histone octamers onto replicating DNA (PubMed:9030687). It performs the first step of the nucleosome assembly process, bringing newly synthesized histones H3 and H4 to replicating DNA; histones H2A/H2B can bind to this chromatin precursor subsequent to DNA replication to complete the histone octamer (By similarity). Plays a role in the maintenance of heterochromatin (By similarity).</text>
</comment>
<comment type="subunit">
    <text evidence="1 4">Component of chromatin assembly factor 1 (CAF-1), composed of MSI1/p50, CAC2/p60 and CAC1/p90 (By similarity). Interacts with RTT106 (PubMed:19683497).</text>
</comment>
<comment type="interaction">
    <interactant intactId="EBI-3920">
        <id>Q04199</id>
    </interactant>
    <interactant intactId="EBI-11391">
        <id>P13712</id>
        <label>MSI1</label>
    </interactant>
    <organismsDiffer>false</organismsDiffer>
    <experiments>4</experiments>
</comment>
<comment type="subcellular location">
    <subcellularLocation>
        <location>Nucleus</location>
    </subcellularLocation>
</comment>
<comment type="miscellaneous">
    <text evidence="3">Present with 2130 molecules/cell in log phase SD medium.</text>
</comment>
<comment type="similarity">
    <text evidence="6">Belongs to the WD repeat HIR1 family.</text>
</comment>
<accession>Q04199</accession>
<accession>D6W0I2</accession>
<feature type="chain" id="PRO_0000050894" description="Chromatin assembly factor 1 subunit B">
    <location>
        <begin position="1"/>
        <end position="468"/>
    </location>
</feature>
<feature type="repeat" description="WD 1">
    <location>
        <begin position="11"/>
        <end position="52"/>
    </location>
</feature>
<feature type="repeat" description="WD 2">
    <location>
        <begin position="69"/>
        <end position="108"/>
    </location>
</feature>
<feature type="repeat" description="WD 3">
    <location>
        <begin position="143"/>
        <end position="182"/>
    </location>
</feature>
<feature type="repeat" description="WD 4">
    <location>
        <begin position="185"/>
        <end position="224"/>
    </location>
</feature>
<feature type="repeat" description="WD 5">
    <location>
        <begin position="371"/>
        <end position="413"/>
    </location>
</feature>
<protein>
    <recommendedName>
        <fullName evidence="2">Chromatin assembly factor 1 subunit B</fullName>
        <shortName evidence="2">CAF-1 subunit B</shortName>
    </recommendedName>
    <alternativeName>
        <fullName>CAF-1 60 kDa subunit</fullName>
    </alternativeName>
    <alternativeName>
        <fullName>Chromatin assembly factor 1 subunit p60</fullName>
    </alternativeName>
</protein>
<proteinExistence type="evidence at protein level"/>
<reference key="1">
    <citation type="journal article" date="1997" name="Nature">
        <title>The nucleotide sequence of Saccharomyces cerevisiae chromosome XIII.</title>
        <authorList>
            <person name="Bowman S."/>
            <person name="Churcher C.M."/>
            <person name="Badcock K."/>
            <person name="Brown D."/>
            <person name="Chillingworth T."/>
            <person name="Connor R."/>
            <person name="Dedman K."/>
            <person name="Devlin K."/>
            <person name="Gentles S."/>
            <person name="Hamlin N."/>
            <person name="Hunt S."/>
            <person name="Jagels K."/>
            <person name="Lye G."/>
            <person name="Moule S."/>
            <person name="Odell C."/>
            <person name="Pearson D."/>
            <person name="Rajandream M.A."/>
            <person name="Rice P."/>
            <person name="Skelton J."/>
            <person name="Walsh S.V."/>
            <person name="Whitehead S."/>
            <person name="Barrell B.G."/>
        </authorList>
    </citation>
    <scope>NUCLEOTIDE SEQUENCE [LARGE SCALE GENOMIC DNA]</scope>
    <source>
        <strain>ATCC 204508 / S288c</strain>
    </source>
</reference>
<reference key="2">
    <citation type="journal article" date="2014" name="G3 (Bethesda)">
        <title>The reference genome sequence of Saccharomyces cerevisiae: Then and now.</title>
        <authorList>
            <person name="Engel S.R."/>
            <person name="Dietrich F.S."/>
            <person name="Fisk D.G."/>
            <person name="Binkley G."/>
            <person name="Balakrishnan R."/>
            <person name="Costanzo M.C."/>
            <person name="Dwight S.S."/>
            <person name="Hitz B.C."/>
            <person name="Karra K."/>
            <person name="Nash R.S."/>
            <person name="Weng S."/>
            <person name="Wong E.D."/>
            <person name="Lloyd P."/>
            <person name="Skrzypek M.S."/>
            <person name="Miyasato S.R."/>
            <person name="Simison M."/>
            <person name="Cherry J.M."/>
        </authorList>
    </citation>
    <scope>GENOME REANNOTATION</scope>
    <source>
        <strain>ATCC 204508 / S288c</strain>
    </source>
</reference>
<reference key="3">
    <citation type="journal article" date="1997" name="Genes Dev.">
        <title>Ultraviolet radiation sensitivity and reduction of telomeric silencing in Saccharomyces cerevisiae cells lacking chromatin assembly factor-I.</title>
        <authorList>
            <person name="Kaufman P.D."/>
            <person name="Kobayashi R."/>
            <person name="Stillman B."/>
        </authorList>
    </citation>
    <scope>PROTEIN SEQUENCE OF 58-83 AND 459-468</scope>
    <scope>FUNCTION</scope>
</reference>
<reference key="4">
    <citation type="journal article" date="2003" name="Nature">
        <title>Global analysis of protein expression in yeast.</title>
        <authorList>
            <person name="Ghaemmaghami S."/>
            <person name="Huh W.-K."/>
            <person name="Bower K."/>
            <person name="Howson R.W."/>
            <person name="Belle A."/>
            <person name="Dephoure N."/>
            <person name="O'Shea E.K."/>
            <person name="Weissman J.S."/>
        </authorList>
    </citation>
    <scope>LEVEL OF PROTEIN EXPRESSION [LARGE SCALE ANALYSIS]</scope>
</reference>
<reference key="5">
    <citation type="journal article" date="2009" name="Mol. Cell">
        <title>Two-color cell array screen reveals interdependent roles for histone chaperones and a chromatin boundary regulator in histone gene repression.</title>
        <authorList>
            <person name="Fillingham J."/>
            <person name="Kainth P."/>
            <person name="Lambert J.P."/>
            <person name="van Bakel H."/>
            <person name="Tsui K."/>
            <person name="Pena-Castillo L."/>
            <person name="Nislow C."/>
            <person name="Figeys D."/>
            <person name="Hughes T.R."/>
            <person name="Greenblatt J."/>
            <person name="Andrews B.J."/>
        </authorList>
    </citation>
    <scope>INTERACTION WITH RTT106</scope>
</reference>
<dbReference type="EMBL" id="X80835">
    <property type="protein sequence ID" value="CAA56795.1"/>
    <property type="molecule type" value="Genomic_DNA"/>
</dbReference>
<dbReference type="EMBL" id="BK006946">
    <property type="protein sequence ID" value="DAA09796.1"/>
    <property type="molecule type" value="Genomic_DNA"/>
</dbReference>
<dbReference type="PIR" id="S47447">
    <property type="entry name" value="S47447"/>
</dbReference>
<dbReference type="RefSeq" id="NP_013605.1">
    <property type="nucleotide sequence ID" value="NM_001182464.1"/>
</dbReference>
<dbReference type="SMR" id="Q04199"/>
<dbReference type="BioGRID" id="35041">
    <property type="interactions" value="221"/>
</dbReference>
<dbReference type="ComplexPortal" id="CPX-568">
    <property type="entry name" value="Chromatin assembly factor 1 complex"/>
</dbReference>
<dbReference type="DIP" id="DIP-811N"/>
<dbReference type="FunCoup" id="Q04199">
    <property type="interactions" value="1021"/>
</dbReference>
<dbReference type="IntAct" id="Q04199">
    <property type="interactions" value="15"/>
</dbReference>
<dbReference type="MINT" id="Q04199"/>
<dbReference type="STRING" id="4932.YML102W"/>
<dbReference type="GlyGen" id="Q04199">
    <property type="glycosylation" value="1 site"/>
</dbReference>
<dbReference type="iPTMnet" id="Q04199"/>
<dbReference type="PaxDb" id="4932-YML102W"/>
<dbReference type="PeptideAtlas" id="Q04199"/>
<dbReference type="EnsemblFungi" id="YML102W_mRNA">
    <property type="protein sequence ID" value="YML102W"/>
    <property type="gene ID" value="YML102W"/>
</dbReference>
<dbReference type="GeneID" id="854869"/>
<dbReference type="KEGG" id="sce:YML102W"/>
<dbReference type="AGR" id="SGD:S000004570"/>
<dbReference type="SGD" id="S000004570">
    <property type="gene designation" value="CAC2"/>
</dbReference>
<dbReference type="VEuPathDB" id="FungiDB:YML102W"/>
<dbReference type="eggNOG" id="KOG1009">
    <property type="taxonomic scope" value="Eukaryota"/>
</dbReference>
<dbReference type="GeneTree" id="ENSGT00550000074968"/>
<dbReference type="HOGENOM" id="CLU_010127_0_0_1"/>
<dbReference type="InParanoid" id="Q04199"/>
<dbReference type="OMA" id="QIYWHES"/>
<dbReference type="OrthoDB" id="71227at2759"/>
<dbReference type="BioCyc" id="YEAST:G3O-32686-MONOMER"/>
<dbReference type="BioGRID-ORCS" id="854869">
    <property type="hits" value="0 hits in 10 CRISPR screens"/>
</dbReference>
<dbReference type="PRO" id="PR:Q04199"/>
<dbReference type="Proteomes" id="UP000002311">
    <property type="component" value="Chromosome XIII"/>
</dbReference>
<dbReference type="RNAct" id="Q04199">
    <property type="molecule type" value="protein"/>
</dbReference>
<dbReference type="GO" id="GO:0033186">
    <property type="term" value="C:CAF-1 complex"/>
    <property type="evidence" value="ECO:0000314"/>
    <property type="project" value="SGD"/>
</dbReference>
<dbReference type="GO" id="GO:0000775">
    <property type="term" value="C:chromosome, centromeric region"/>
    <property type="evidence" value="ECO:0000314"/>
    <property type="project" value="SGD"/>
</dbReference>
<dbReference type="GO" id="GO:0005829">
    <property type="term" value="C:cytosol"/>
    <property type="evidence" value="ECO:0000314"/>
    <property type="project" value="SGD"/>
</dbReference>
<dbReference type="GO" id="GO:0000786">
    <property type="term" value="C:nucleosome"/>
    <property type="evidence" value="ECO:0000314"/>
    <property type="project" value="ComplexPortal"/>
</dbReference>
<dbReference type="GO" id="GO:0005634">
    <property type="term" value="C:nucleus"/>
    <property type="evidence" value="ECO:0000314"/>
    <property type="project" value="SGD"/>
</dbReference>
<dbReference type="GO" id="GO:0006325">
    <property type="term" value="P:chromatin organization"/>
    <property type="evidence" value="ECO:0000314"/>
    <property type="project" value="ComplexPortal"/>
</dbReference>
<dbReference type="GO" id="GO:0006281">
    <property type="term" value="P:DNA repair"/>
    <property type="evidence" value="ECO:0000303"/>
    <property type="project" value="ComplexPortal"/>
</dbReference>
<dbReference type="GO" id="GO:0006260">
    <property type="term" value="P:DNA replication"/>
    <property type="evidence" value="ECO:0000303"/>
    <property type="project" value="ComplexPortal"/>
</dbReference>
<dbReference type="GO" id="GO:0006335">
    <property type="term" value="P:DNA replication-dependent chromatin assembly"/>
    <property type="evidence" value="ECO:0000314"/>
    <property type="project" value="ComplexPortal"/>
</dbReference>
<dbReference type="GO" id="GO:0006334">
    <property type="term" value="P:nucleosome assembly"/>
    <property type="evidence" value="ECO:0000318"/>
    <property type="project" value="GO_Central"/>
</dbReference>
<dbReference type="FunFam" id="2.130.10.10:FF:001085">
    <property type="entry name" value="Chromatin assembly factor-I p60 subunit"/>
    <property type="match status" value="1"/>
</dbReference>
<dbReference type="Gene3D" id="2.130.10.10">
    <property type="entry name" value="YVTN repeat-like/Quinoprotein amine dehydrogenase"/>
    <property type="match status" value="2"/>
</dbReference>
<dbReference type="InterPro" id="IPR055410">
    <property type="entry name" value="CAF1B_HIR1_beta-prop"/>
</dbReference>
<dbReference type="InterPro" id="IPR045145">
    <property type="entry name" value="PTHR15271"/>
</dbReference>
<dbReference type="InterPro" id="IPR015943">
    <property type="entry name" value="WD40/YVTN_repeat-like_dom_sf"/>
</dbReference>
<dbReference type="InterPro" id="IPR036322">
    <property type="entry name" value="WD40_repeat_dom_sf"/>
</dbReference>
<dbReference type="InterPro" id="IPR001680">
    <property type="entry name" value="WD40_rpt"/>
</dbReference>
<dbReference type="PANTHER" id="PTHR15271">
    <property type="entry name" value="CHROMATIN ASSEMBLY FACTOR 1 SUBUNIT B"/>
    <property type="match status" value="1"/>
</dbReference>
<dbReference type="PANTHER" id="PTHR15271:SF4">
    <property type="entry name" value="CHROMATIN ASSEMBLY FACTOR 1 SUBUNIT B"/>
    <property type="match status" value="1"/>
</dbReference>
<dbReference type="Pfam" id="PF24105">
    <property type="entry name" value="Beta-prop_CAF1B_HIR1"/>
    <property type="match status" value="1"/>
</dbReference>
<dbReference type="SMART" id="SM00320">
    <property type="entry name" value="WD40"/>
    <property type="match status" value="5"/>
</dbReference>
<dbReference type="SUPFAM" id="SSF50978">
    <property type="entry name" value="WD40 repeat-like"/>
    <property type="match status" value="1"/>
</dbReference>
<dbReference type="PROSITE" id="PS50082">
    <property type="entry name" value="WD_REPEATS_2"/>
    <property type="match status" value="2"/>
</dbReference>
<dbReference type="PROSITE" id="PS50294">
    <property type="entry name" value="WD_REPEATS_REGION"/>
    <property type="match status" value="1"/>
</dbReference>
<name>CAF1B_YEAST</name>
<organism>
    <name type="scientific">Saccharomyces cerevisiae (strain ATCC 204508 / S288c)</name>
    <name type="common">Baker's yeast</name>
    <dbReference type="NCBI Taxonomy" id="559292"/>
    <lineage>
        <taxon>Eukaryota</taxon>
        <taxon>Fungi</taxon>
        <taxon>Dikarya</taxon>
        <taxon>Ascomycota</taxon>
        <taxon>Saccharomycotina</taxon>
        <taxon>Saccharomycetes</taxon>
        <taxon>Saccharomycetales</taxon>
        <taxon>Saccharomycetaceae</taxon>
        <taxon>Saccharomyces</taxon>
    </lineage>
</organism>
<keyword id="KW-0143">Chaperone</keyword>
<keyword id="KW-0156">Chromatin regulator</keyword>
<keyword id="KW-0903">Direct protein sequencing</keyword>
<keyword id="KW-0227">DNA damage</keyword>
<keyword id="KW-0234">DNA repair</keyword>
<keyword id="KW-0235">DNA replication</keyword>
<keyword id="KW-0539">Nucleus</keyword>
<keyword id="KW-1185">Reference proteome</keyword>
<keyword id="KW-0677">Repeat</keyword>
<keyword id="KW-0853">WD repeat</keyword>
<evidence type="ECO:0000250" key="1">
    <source>
        <dbReference type="UniProtKB" id="O13985"/>
    </source>
</evidence>
<evidence type="ECO:0000250" key="2">
    <source>
        <dbReference type="UniProtKB" id="Q13112"/>
    </source>
</evidence>
<evidence type="ECO:0000269" key="3">
    <source>
    </source>
</evidence>
<evidence type="ECO:0000269" key="4">
    <source>
    </source>
</evidence>
<evidence type="ECO:0000269" key="5">
    <source>
    </source>
</evidence>
<evidence type="ECO:0000305" key="6"/>
<gene>
    <name type="primary">CAC2</name>
    <name type="ordered locus">YML102W</name>
</gene>